<reference key="1">
    <citation type="submission" date="2005-08" db="EMBL/GenBank/DDBJ databases">
        <title>Complete sequence of Pelodictyon luteolum DSM 273.</title>
        <authorList>
            <consortium name="US DOE Joint Genome Institute"/>
            <person name="Copeland A."/>
            <person name="Lucas S."/>
            <person name="Lapidus A."/>
            <person name="Barry K."/>
            <person name="Detter J.C."/>
            <person name="Glavina T."/>
            <person name="Hammon N."/>
            <person name="Israni S."/>
            <person name="Pitluck S."/>
            <person name="Bryant D."/>
            <person name="Schmutz J."/>
            <person name="Larimer F."/>
            <person name="Land M."/>
            <person name="Kyrpides N."/>
            <person name="Ivanova N."/>
            <person name="Richardson P."/>
        </authorList>
    </citation>
    <scope>NUCLEOTIDE SEQUENCE [LARGE SCALE GENOMIC DNA]</scope>
    <source>
        <strain>DSM 273 / BCRC 81028 / 2530</strain>
    </source>
</reference>
<dbReference type="EMBL" id="CP000096">
    <property type="protein sequence ID" value="ABB23004.1"/>
    <property type="molecule type" value="Genomic_DNA"/>
</dbReference>
<dbReference type="RefSeq" id="WP_011356880.1">
    <property type="nucleotide sequence ID" value="NC_007512.1"/>
</dbReference>
<dbReference type="SMR" id="Q3B6M7"/>
<dbReference type="STRING" id="319225.Plut_0114"/>
<dbReference type="KEGG" id="plt:Plut_0114"/>
<dbReference type="eggNOG" id="COG0360">
    <property type="taxonomic scope" value="Bacteria"/>
</dbReference>
<dbReference type="HOGENOM" id="CLU_113441_4_1_10"/>
<dbReference type="OrthoDB" id="9812702at2"/>
<dbReference type="Proteomes" id="UP000002709">
    <property type="component" value="Chromosome"/>
</dbReference>
<dbReference type="GO" id="GO:0005737">
    <property type="term" value="C:cytoplasm"/>
    <property type="evidence" value="ECO:0007669"/>
    <property type="project" value="UniProtKB-ARBA"/>
</dbReference>
<dbReference type="GO" id="GO:1990904">
    <property type="term" value="C:ribonucleoprotein complex"/>
    <property type="evidence" value="ECO:0007669"/>
    <property type="project" value="UniProtKB-KW"/>
</dbReference>
<dbReference type="GO" id="GO:0005840">
    <property type="term" value="C:ribosome"/>
    <property type="evidence" value="ECO:0007669"/>
    <property type="project" value="UniProtKB-KW"/>
</dbReference>
<dbReference type="GO" id="GO:0070181">
    <property type="term" value="F:small ribosomal subunit rRNA binding"/>
    <property type="evidence" value="ECO:0007669"/>
    <property type="project" value="TreeGrafter"/>
</dbReference>
<dbReference type="GO" id="GO:0003735">
    <property type="term" value="F:structural constituent of ribosome"/>
    <property type="evidence" value="ECO:0007669"/>
    <property type="project" value="InterPro"/>
</dbReference>
<dbReference type="GO" id="GO:0006412">
    <property type="term" value="P:translation"/>
    <property type="evidence" value="ECO:0007669"/>
    <property type="project" value="UniProtKB-UniRule"/>
</dbReference>
<dbReference type="CDD" id="cd00473">
    <property type="entry name" value="bS6"/>
    <property type="match status" value="1"/>
</dbReference>
<dbReference type="Gene3D" id="3.30.70.60">
    <property type="match status" value="1"/>
</dbReference>
<dbReference type="HAMAP" id="MF_00360">
    <property type="entry name" value="Ribosomal_bS6"/>
    <property type="match status" value="1"/>
</dbReference>
<dbReference type="InterPro" id="IPR000529">
    <property type="entry name" value="Ribosomal_bS6"/>
</dbReference>
<dbReference type="InterPro" id="IPR035980">
    <property type="entry name" value="Ribosomal_bS6_sf"/>
</dbReference>
<dbReference type="InterPro" id="IPR020814">
    <property type="entry name" value="Ribosomal_S6_plastid/chlpt"/>
</dbReference>
<dbReference type="InterPro" id="IPR014717">
    <property type="entry name" value="Transl_elong_EF1B/ribsomal_bS6"/>
</dbReference>
<dbReference type="NCBIfam" id="TIGR00166">
    <property type="entry name" value="S6"/>
    <property type="match status" value="1"/>
</dbReference>
<dbReference type="PANTHER" id="PTHR21011">
    <property type="entry name" value="MITOCHONDRIAL 28S RIBOSOMAL PROTEIN S6"/>
    <property type="match status" value="1"/>
</dbReference>
<dbReference type="PANTHER" id="PTHR21011:SF1">
    <property type="entry name" value="SMALL RIBOSOMAL SUBUNIT PROTEIN BS6M"/>
    <property type="match status" value="1"/>
</dbReference>
<dbReference type="Pfam" id="PF01250">
    <property type="entry name" value="Ribosomal_S6"/>
    <property type="match status" value="1"/>
</dbReference>
<dbReference type="SUPFAM" id="SSF54995">
    <property type="entry name" value="Ribosomal protein S6"/>
    <property type="match status" value="1"/>
</dbReference>
<proteinExistence type="inferred from homology"/>
<protein>
    <recommendedName>
        <fullName evidence="1">Small ribosomal subunit protein bS6</fullName>
    </recommendedName>
    <alternativeName>
        <fullName evidence="2">30S ribosomal protein S6</fullName>
    </alternativeName>
</protein>
<evidence type="ECO:0000255" key="1">
    <source>
        <dbReference type="HAMAP-Rule" id="MF_00360"/>
    </source>
</evidence>
<evidence type="ECO:0000305" key="2"/>
<name>RS6_CHLL3</name>
<gene>
    <name evidence="1" type="primary">rpsF</name>
    <name type="ordered locus">Plut_0114</name>
</gene>
<sequence>METNKLYECTVIIDGGLQDEAIAAAMEMVQKVITEKGGSISSVLDIGRRKTAYPIKKKTIGSYAHIEFTAATPVIAEIERVLRYEEVLLRYLIVHLTSPLLEMRKRVEKYSVVIGSPEDNVASETDAADKVAK</sequence>
<feature type="chain" id="PRO_0000229561" description="Small ribosomal subunit protein bS6">
    <location>
        <begin position="1"/>
        <end position="133"/>
    </location>
</feature>
<accession>Q3B6M7</accession>
<organism>
    <name type="scientific">Chlorobium luteolum (strain DSM 273 / BCRC 81028 / 2530)</name>
    <name type="common">Pelodictyon luteolum</name>
    <dbReference type="NCBI Taxonomy" id="319225"/>
    <lineage>
        <taxon>Bacteria</taxon>
        <taxon>Pseudomonadati</taxon>
        <taxon>Chlorobiota</taxon>
        <taxon>Chlorobiia</taxon>
        <taxon>Chlorobiales</taxon>
        <taxon>Chlorobiaceae</taxon>
        <taxon>Chlorobium/Pelodictyon group</taxon>
        <taxon>Pelodictyon</taxon>
    </lineage>
</organism>
<comment type="function">
    <text evidence="1">Binds together with bS18 to 16S ribosomal RNA.</text>
</comment>
<comment type="similarity">
    <text evidence="1">Belongs to the bacterial ribosomal protein bS6 family.</text>
</comment>
<keyword id="KW-1185">Reference proteome</keyword>
<keyword id="KW-0687">Ribonucleoprotein</keyword>
<keyword id="KW-0689">Ribosomal protein</keyword>
<keyword id="KW-0694">RNA-binding</keyword>
<keyword id="KW-0699">rRNA-binding</keyword>